<feature type="chain" id="PRO_1000076026" description="Deoxyribose-phosphate aldolase">
    <location>
        <begin position="1"/>
        <end position="223"/>
    </location>
</feature>
<feature type="active site" description="Proton donor/acceptor" evidence="1">
    <location>
        <position position="89"/>
    </location>
</feature>
<feature type="active site" description="Schiff-base intermediate with acetaldehyde" evidence="1">
    <location>
        <position position="152"/>
    </location>
</feature>
<feature type="active site" description="Proton donor/acceptor" evidence="1">
    <location>
        <position position="181"/>
    </location>
</feature>
<proteinExistence type="inferred from homology"/>
<organism>
    <name type="scientific">Bacillus cytotoxicus (strain DSM 22905 / CIP 110041 / 391-98 / NVH 391-98)</name>
    <dbReference type="NCBI Taxonomy" id="315749"/>
    <lineage>
        <taxon>Bacteria</taxon>
        <taxon>Bacillati</taxon>
        <taxon>Bacillota</taxon>
        <taxon>Bacilli</taxon>
        <taxon>Bacillales</taxon>
        <taxon>Bacillaceae</taxon>
        <taxon>Bacillus</taxon>
        <taxon>Bacillus cereus group</taxon>
    </lineage>
</organism>
<sequence length="223" mass="23676">MNIAKLIDHTVLKPNSKKEDVMKVIEEAKKYNFASVCINPTWVKLAAEELAGHDVDVCTVIGFPLGANTTETKVFETKDVIAKGATEVDMVINVGALKDGDDEFVEKDIREVVQAAKGKALVKVIIETCLLTDEEKVRACELSVKAGADFVKTSTGFSTGGATAEDIALMRKTVGPNVGVKASGGVRTREDAEKMIEAGASRIGASASVAIVLNDEKGATDNY</sequence>
<comment type="function">
    <text evidence="1">Catalyzes a reversible aldol reaction between acetaldehyde and D-glyceraldehyde 3-phosphate to generate 2-deoxy-D-ribose 5-phosphate.</text>
</comment>
<comment type="catalytic activity">
    <reaction evidence="1">
        <text>2-deoxy-D-ribose 5-phosphate = D-glyceraldehyde 3-phosphate + acetaldehyde</text>
        <dbReference type="Rhea" id="RHEA:12821"/>
        <dbReference type="ChEBI" id="CHEBI:15343"/>
        <dbReference type="ChEBI" id="CHEBI:59776"/>
        <dbReference type="ChEBI" id="CHEBI:62877"/>
        <dbReference type="EC" id="4.1.2.4"/>
    </reaction>
</comment>
<comment type="pathway">
    <text evidence="1">Carbohydrate degradation; 2-deoxy-D-ribose 1-phosphate degradation; D-glyceraldehyde 3-phosphate and acetaldehyde from 2-deoxy-alpha-D-ribose 1-phosphate: step 2/2.</text>
</comment>
<comment type="subcellular location">
    <subcellularLocation>
        <location evidence="1">Cytoplasm</location>
    </subcellularLocation>
</comment>
<comment type="similarity">
    <text evidence="1">Belongs to the DeoC/FbaB aldolase family. DeoC type 1 subfamily.</text>
</comment>
<accession>A7GNS8</accession>
<evidence type="ECO:0000255" key="1">
    <source>
        <dbReference type="HAMAP-Rule" id="MF_00114"/>
    </source>
</evidence>
<keyword id="KW-0963">Cytoplasm</keyword>
<keyword id="KW-0456">Lyase</keyword>
<keyword id="KW-0704">Schiff base</keyword>
<reference key="1">
    <citation type="journal article" date="2008" name="Chem. Biol. Interact.">
        <title>Extending the Bacillus cereus group genomics to putative food-borne pathogens of different toxicity.</title>
        <authorList>
            <person name="Lapidus A."/>
            <person name="Goltsman E."/>
            <person name="Auger S."/>
            <person name="Galleron N."/>
            <person name="Segurens B."/>
            <person name="Dossat C."/>
            <person name="Land M.L."/>
            <person name="Broussolle V."/>
            <person name="Brillard J."/>
            <person name="Guinebretiere M.-H."/>
            <person name="Sanchis V."/>
            <person name="Nguen-the C."/>
            <person name="Lereclus D."/>
            <person name="Richardson P."/>
            <person name="Wincker P."/>
            <person name="Weissenbach J."/>
            <person name="Ehrlich S.D."/>
            <person name="Sorokin A."/>
        </authorList>
    </citation>
    <scope>NUCLEOTIDE SEQUENCE [LARGE SCALE GENOMIC DNA]</scope>
    <source>
        <strain>DSM 22905 / CIP 110041 / 391-98 / NVH 391-98</strain>
    </source>
</reference>
<gene>
    <name evidence="1" type="primary">deoC</name>
    <name type="ordered locus">Bcer98_1469</name>
</gene>
<name>DEOC_BACCN</name>
<protein>
    <recommendedName>
        <fullName evidence="1">Deoxyribose-phosphate aldolase</fullName>
        <shortName evidence="1">DERA</shortName>
        <ecNumber evidence="1">4.1.2.4</ecNumber>
    </recommendedName>
    <alternativeName>
        <fullName evidence="1">2-deoxy-D-ribose 5-phosphate aldolase</fullName>
    </alternativeName>
    <alternativeName>
        <fullName evidence="1">Phosphodeoxyriboaldolase</fullName>
        <shortName evidence="1">Deoxyriboaldolase</shortName>
    </alternativeName>
</protein>
<dbReference type="EC" id="4.1.2.4" evidence="1"/>
<dbReference type="EMBL" id="CP000764">
    <property type="protein sequence ID" value="ABS21786.1"/>
    <property type="molecule type" value="Genomic_DNA"/>
</dbReference>
<dbReference type="RefSeq" id="WP_012093960.1">
    <property type="nucleotide sequence ID" value="NC_009674.1"/>
</dbReference>
<dbReference type="SMR" id="A7GNS8"/>
<dbReference type="STRING" id="315749.Bcer98_1469"/>
<dbReference type="GeneID" id="33896807"/>
<dbReference type="KEGG" id="bcy:Bcer98_1469"/>
<dbReference type="eggNOG" id="COG0274">
    <property type="taxonomic scope" value="Bacteria"/>
</dbReference>
<dbReference type="HOGENOM" id="CLU_053595_0_1_9"/>
<dbReference type="OrthoDB" id="9778711at2"/>
<dbReference type="UniPathway" id="UPA00002">
    <property type="reaction ID" value="UER00468"/>
</dbReference>
<dbReference type="Proteomes" id="UP000002300">
    <property type="component" value="Chromosome"/>
</dbReference>
<dbReference type="GO" id="GO:0005737">
    <property type="term" value="C:cytoplasm"/>
    <property type="evidence" value="ECO:0007669"/>
    <property type="project" value="UniProtKB-SubCell"/>
</dbReference>
<dbReference type="GO" id="GO:0004139">
    <property type="term" value="F:deoxyribose-phosphate aldolase activity"/>
    <property type="evidence" value="ECO:0007669"/>
    <property type="project" value="UniProtKB-UniRule"/>
</dbReference>
<dbReference type="GO" id="GO:0006018">
    <property type="term" value="P:2-deoxyribose 1-phosphate catabolic process"/>
    <property type="evidence" value="ECO:0007669"/>
    <property type="project" value="UniProtKB-UniRule"/>
</dbReference>
<dbReference type="GO" id="GO:0016052">
    <property type="term" value="P:carbohydrate catabolic process"/>
    <property type="evidence" value="ECO:0007669"/>
    <property type="project" value="TreeGrafter"/>
</dbReference>
<dbReference type="GO" id="GO:0009264">
    <property type="term" value="P:deoxyribonucleotide catabolic process"/>
    <property type="evidence" value="ECO:0007669"/>
    <property type="project" value="InterPro"/>
</dbReference>
<dbReference type="CDD" id="cd00959">
    <property type="entry name" value="DeoC"/>
    <property type="match status" value="1"/>
</dbReference>
<dbReference type="FunFam" id="3.20.20.70:FF:000044">
    <property type="entry name" value="Deoxyribose-phosphate aldolase"/>
    <property type="match status" value="1"/>
</dbReference>
<dbReference type="Gene3D" id="3.20.20.70">
    <property type="entry name" value="Aldolase class I"/>
    <property type="match status" value="1"/>
</dbReference>
<dbReference type="HAMAP" id="MF_00114">
    <property type="entry name" value="DeoC_type1"/>
    <property type="match status" value="1"/>
</dbReference>
<dbReference type="InterPro" id="IPR013785">
    <property type="entry name" value="Aldolase_TIM"/>
</dbReference>
<dbReference type="InterPro" id="IPR011343">
    <property type="entry name" value="DeoC"/>
</dbReference>
<dbReference type="InterPro" id="IPR002915">
    <property type="entry name" value="DeoC/FbaB/LacD_aldolase"/>
</dbReference>
<dbReference type="InterPro" id="IPR028581">
    <property type="entry name" value="DeoC_typeI"/>
</dbReference>
<dbReference type="NCBIfam" id="TIGR00126">
    <property type="entry name" value="deoC"/>
    <property type="match status" value="1"/>
</dbReference>
<dbReference type="PANTHER" id="PTHR10889">
    <property type="entry name" value="DEOXYRIBOSE-PHOSPHATE ALDOLASE"/>
    <property type="match status" value="1"/>
</dbReference>
<dbReference type="PANTHER" id="PTHR10889:SF1">
    <property type="entry name" value="DEOXYRIBOSE-PHOSPHATE ALDOLASE"/>
    <property type="match status" value="1"/>
</dbReference>
<dbReference type="Pfam" id="PF01791">
    <property type="entry name" value="DeoC"/>
    <property type="match status" value="1"/>
</dbReference>
<dbReference type="PIRSF" id="PIRSF001357">
    <property type="entry name" value="DeoC"/>
    <property type="match status" value="1"/>
</dbReference>
<dbReference type="SMART" id="SM01133">
    <property type="entry name" value="DeoC"/>
    <property type="match status" value="1"/>
</dbReference>
<dbReference type="SUPFAM" id="SSF51569">
    <property type="entry name" value="Aldolase"/>
    <property type="match status" value="1"/>
</dbReference>